<protein>
    <recommendedName>
        <fullName evidence="1">Endoribonuclease YbeY</fullName>
        <ecNumber evidence="1">3.1.-.-</ecNumber>
    </recommendedName>
</protein>
<accession>Q7VZ88</accession>
<organism>
    <name type="scientific">Bordetella pertussis (strain Tohama I / ATCC BAA-589 / NCTC 13251)</name>
    <dbReference type="NCBI Taxonomy" id="257313"/>
    <lineage>
        <taxon>Bacteria</taxon>
        <taxon>Pseudomonadati</taxon>
        <taxon>Pseudomonadota</taxon>
        <taxon>Betaproteobacteria</taxon>
        <taxon>Burkholderiales</taxon>
        <taxon>Alcaligenaceae</taxon>
        <taxon>Bordetella</taxon>
    </lineage>
</organism>
<name>YBEY_BORPE</name>
<reference key="1">
    <citation type="journal article" date="2003" name="Nat. Genet.">
        <title>Comparative analysis of the genome sequences of Bordetella pertussis, Bordetella parapertussis and Bordetella bronchiseptica.</title>
        <authorList>
            <person name="Parkhill J."/>
            <person name="Sebaihia M."/>
            <person name="Preston A."/>
            <person name="Murphy L.D."/>
            <person name="Thomson N.R."/>
            <person name="Harris D.E."/>
            <person name="Holden M.T.G."/>
            <person name="Churcher C.M."/>
            <person name="Bentley S.D."/>
            <person name="Mungall K.L."/>
            <person name="Cerdeno-Tarraga A.-M."/>
            <person name="Temple L."/>
            <person name="James K.D."/>
            <person name="Harris B."/>
            <person name="Quail M.A."/>
            <person name="Achtman M."/>
            <person name="Atkin R."/>
            <person name="Baker S."/>
            <person name="Basham D."/>
            <person name="Bason N."/>
            <person name="Cherevach I."/>
            <person name="Chillingworth T."/>
            <person name="Collins M."/>
            <person name="Cronin A."/>
            <person name="Davis P."/>
            <person name="Doggett J."/>
            <person name="Feltwell T."/>
            <person name="Goble A."/>
            <person name="Hamlin N."/>
            <person name="Hauser H."/>
            <person name="Holroyd S."/>
            <person name="Jagels K."/>
            <person name="Leather S."/>
            <person name="Moule S."/>
            <person name="Norberczak H."/>
            <person name="O'Neil S."/>
            <person name="Ormond D."/>
            <person name="Price C."/>
            <person name="Rabbinowitsch E."/>
            <person name="Rutter S."/>
            <person name="Sanders M."/>
            <person name="Saunders D."/>
            <person name="Seeger K."/>
            <person name="Sharp S."/>
            <person name="Simmonds M."/>
            <person name="Skelton J."/>
            <person name="Squares R."/>
            <person name="Squares S."/>
            <person name="Stevens K."/>
            <person name="Unwin L."/>
            <person name="Whitehead S."/>
            <person name="Barrell B.G."/>
            <person name="Maskell D.J."/>
        </authorList>
    </citation>
    <scope>NUCLEOTIDE SEQUENCE [LARGE SCALE GENOMIC DNA]</scope>
    <source>
        <strain>Tohama I / ATCC BAA-589 / NCTC 13251</strain>
    </source>
</reference>
<dbReference type="EC" id="3.1.-.-" evidence="1"/>
<dbReference type="EMBL" id="BX640414">
    <property type="protein sequence ID" value="CAE41339.1"/>
    <property type="status" value="ALT_INIT"/>
    <property type="molecule type" value="Genomic_DNA"/>
</dbReference>
<dbReference type="RefSeq" id="NP_879826.1">
    <property type="nucleotide sequence ID" value="NC_002929.2"/>
</dbReference>
<dbReference type="RefSeq" id="WP_003809396.1">
    <property type="nucleotide sequence ID" value="NZ_CP039022.1"/>
</dbReference>
<dbReference type="SMR" id="Q7VZ88"/>
<dbReference type="STRING" id="257313.BP1039"/>
<dbReference type="PaxDb" id="257313-BP1039"/>
<dbReference type="GeneID" id="69600965"/>
<dbReference type="KEGG" id="bpe:BP1039"/>
<dbReference type="PATRIC" id="fig|257313.5.peg.1110"/>
<dbReference type="eggNOG" id="COG0319">
    <property type="taxonomic scope" value="Bacteria"/>
</dbReference>
<dbReference type="HOGENOM" id="CLU_106710_0_1_4"/>
<dbReference type="Proteomes" id="UP000002676">
    <property type="component" value="Chromosome"/>
</dbReference>
<dbReference type="GO" id="GO:0005737">
    <property type="term" value="C:cytoplasm"/>
    <property type="evidence" value="ECO:0007669"/>
    <property type="project" value="UniProtKB-SubCell"/>
</dbReference>
<dbReference type="GO" id="GO:0004222">
    <property type="term" value="F:metalloendopeptidase activity"/>
    <property type="evidence" value="ECO:0007669"/>
    <property type="project" value="InterPro"/>
</dbReference>
<dbReference type="GO" id="GO:0004521">
    <property type="term" value="F:RNA endonuclease activity"/>
    <property type="evidence" value="ECO:0007669"/>
    <property type="project" value="UniProtKB-UniRule"/>
</dbReference>
<dbReference type="GO" id="GO:0008270">
    <property type="term" value="F:zinc ion binding"/>
    <property type="evidence" value="ECO:0007669"/>
    <property type="project" value="UniProtKB-UniRule"/>
</dbReference>
<dbReference type="GO" id="GO:0006364">
    <property type="term" value="P:rRNA processing"/>
    <property type="evidence" value="ECO:0007669"/>
    <property type="project" value="UniProtKB-UniRule"/>
</dbReference>
<dbReference type="Gene3D" id="3.40.390.30">
    <property type="entry name" value="Metalloproteases ('zincins'), catalytic domain"/>
    <property type="match status" value="1"/>
</dbReference>
<dbReference type="HAMAP" id="MF_00009">
    <property type="entry name" value="Endoribonucl_YbeY"/>
    <property type="match status" value="1"/>
</dbReference>
<dbReference type="InterPro" id="IPR023091">
    <property type="entry name" value="MetalPrtase_cat_dom_sf_prd"/>
</dbReference>
<dbReference type="InterPro" id="IPR002036">
    <property type="entry name" value="YbeY"/>
</dbReference>
<dbReference type="InterPro" id="IPR020549">
    <property type="entry name" value="YbeY_CS"/>
</dbReference>
<dbReference type="NCBIfam" id="TIGR00043">
    <property type="entry name" value="rRNA maturation RNase YbeY"/>
    <property type="match status" value="1"/>
</dbReference>
<dbReference type="PANTHER" id="PTHR46986">
    <property type="entry name" value="ENDORIBONUCLEASE YBEY, CHLOROPLASTIC"/>
    <property type="match status" value="1"/>
</dbReference>
<dbReference type="PANTHER" id="PTHR46986:SF1">
    <property type="entry name" value="ENDORIBONUCLEASE YBEY, CHLOROPLASTIC"/>
    <property type="match status" value="1"/>
</dbReference>
<dbReference type="Pfam" id="PF02130">
    <property type="entry name" value="YbeY"/>
    <property type="match status" value="1"/>
</dbReference>
<dbReference type="SUPFAM" id="SSF55486">
    <property type="entry name" value="Metalloproteases ('zincins'), catalytic domain"/>
    <property type="match status" value="1"/>
</dbReference>
<dbReference type="PROSITE" id="PS01306">
    <property type="entry name" value="UPF0054"/>
    <property type="match status" value="1"/>
</dbReference>
<gene>
    <name evidence="1" type="primary">ybeY</name>
    <name type="ordered locus">BP1039</name>
</gene>
<proteinExistence type="inferred from homology"/>
<sequence length="157" mass="17027">MATELSLSVQYGVADARLPRWRLRRWVQYALAGAAGDGHAGLAGAELGLRLVGLAEGRRLNREFRGRDYATNVLTFEYGTGPDGVARGDIVVCVPVLAREAREQRKTLLDHAAHLTVHGTLHALGYDHIKAGEARRMEALETAVLARMGIADPYLAA</sequence>
<keyword id="KW-0963">Cytoplasm</keyword>
<keyword id="KW-0255">Endonuclease</keyword>
<keyword id="KW-0378">Hydrolase</keyword>
<keyword id="KW-0479">Metal-binding</keyword>
<keyword id="KW-0540">Nuclease</keyword>
<keyword id="KW-1185">Reference proteome</keyword>
<keyword id="KW-0690">Ribosome biogenesis</keyword>
<keyword id="KW-0698">rRNA processing</keyword>
<keyword id="KW-0862">Zinc</keyword>
<comment type="function">
    <text evidence="1">Single strand-specific metallo-endoribonuclease involved in late-stage 70S ribosome quality control and in maturation of the 3' terminus of the 16S rRNA.</text>
</comment>
<comment type="cofactor">
    <cofactor evidence="1">
        <name>Zn(2+)</name>
        <dbReference type="ChEBI" id="CHEBI:29105"/>
    </cofactor>
    <text evidence="1">Binds 1 zinc ion.</text>
</comment>
<comment type="subcellular location">
    <subcellularLocation>
        <location evidence="1">Cytoplasm</location>
    </subcellularLocation>
</comment>
<comment type="similarity">
    <text evidence="1">Belongs to the endoribonuclease YbeY family.</text>
</comment>
<comment type="sequence caution" evidence="2">
    <conflict type="erroneous initiation">
        <sequence resource="EMBL-CDS" id="CAE41339"/>
    </conflict>
</comment>
<evidence type="ECO:0000255" key="1">
    <source>
        <dbReference type="HAMAP-Rule" id="MF_00009"/>
    </source>
</evidence>
<evidence type="ECO:0000305" key="2"/>
<feature type="chain" id="PRO_0000102421" description="Endoribonuclease YbeY">
    <location>
        <begin position="1"/>
        <end position="157"/>
    </location>
</feature>
<feature type="binding site" evidence="1">
    <location>
        <position position="118"/>
    </location>
    <ligand>
        <name>Zn(2+)</name>
        <dbReference type="ChEBI" id="CHEBI:29105"/>
        <note>catalytic</note>
    </ligand>
</feature>
<feature type="binding site" evidence="1">
    <location>
        <position position="122"/>
    </location>
    <ligand>
        <name>Zn(2+)</name>
        <dbReference type="ChEBI" id="CHEBI:29105"/>
        <note>catalytic</note>
    </ligand>
</feature>
<feature type="binding site" evidence="1">
    <location>
        <position position="128"/>
    </location>
    <ligand>
        <name>Zn(2+)</name>
        <dbReference type="ChEBI" id="CHEBI:29105"/>
        <note>catalytic</note>
    </ligand>
</feature>